<protein>
    <recommendedName>
        <fullName>Tyrosine-protein phosphatase non-receptor type 7</fullName>
        <ecNumber>3.1.3.48</ecNumber>
    </recommendedName>
    <alternativeName>
        <fullName>Hematopoietic protein-tyrosine phosphatase</fullName>
        <shortName>HEPTP</shortName>
    </alternativeName>
    <alternativeName>
        <fullName>Protein-tyrosine phosphatase LC-PTP</fullName>
    </alternativeName>
</protein>
<gene>
    <name type="primary">Ptpn7</name>
    <name type="synonym">Lcptp</name>
</gene>
<comment type="function">
    <text evidence="1">May play a role in the regulation of T and B-lymphocyte development and signal transduction.</text>
</comment>
<comment type="catalytic activity">
    <reaction evidence="4">
        <text>O-phospho-L-tyrosyl-[protein] + H2O = L-tyrosyl-[protein] + phosphate</text>
        <dbReference type="Rhea" id="RHEA:10684"/>
        <dbReference type="Rhea" id="RHEA-COMP:10136"/>
        <dbReference type="Rhea" id="RHEA-COMP:20101"/>
        <dbReference type="ChEBI" id="CHEBI:15377"/>
        <dbReference type="ChEBI" id="CHEBI:43474"/>
        <dbReference type="ChEBI" id="CHEBI:46858"/>
        <dbReference type="ChEBI" id="CHEBI:61978"/>
        <dbReference type="EC" id="3.1.3.48"/>
    </reaction>
</comment>
<comment type="activity regulation">
    <text evidence="6">Inhibited in cells after FCER1A triggering.</text>
</comment>
<comment type="subcellular location">
    <subcellularLocation>
        <location evidence="1">Cytoplasm</location>
    </subcellularLocation>
    <subcellularLocation>
        <location evidence="6">Cytoplasm</location>
        <location evidence="6">Cytoskeleton</location>
    </subcellularLocation>
</comment>
<comment type="PTM">
    <text evidence="6">Oxidized at active site cysteine. Treatment with pervanadate (vanadate and H(2)O(2)) or with antigen enhanced oxidation of active site cysteine.</text>
</comment>
<comment type="similarity">
    <text evidence="7">Belongs to the protein-tyrosine phosphatase family. Non-receptor class subfamily.</text>
</comment>
<proteinExistence type="evidence at protein level"/>
<keyword id="KW-0963">Cytoplasm</keyword>
<keyword id="KW-0206">Cytoskeleton</keyword>
<keyword id="KW-0378">Hydrolase</keyword>
<keyword id="KW-0558">Oxidation</keyword>
<keyword id="KW-0597">Phosphoprotein</keyword>
<keyword id="KW-0904">Protein phosphatase</keyword>
<keyword id="KW-1185">Reference proteome</keyword>
<evidence type="ECO:0000250" key="1"/>
<evidence type="ECO:0000250" key="2">
    <source>
        <dbReference type="UniProtKB" id="P35236"/>
    </source>
</evidence>
<evidence type="ECO:0000255" key="3">
    <source>
        <dbReference type="PROSITE-ProRule" id="PRU00160"/>
    </source>
</evidence>
<evidence type="ECO:0000255" key="4">
    <source>
        <dbReference type="PROSITE-ProRule" id="PRU10044"/>
    </source>
</evidence>
<evidence type="ECO:0000256" key="5">
    <source>
        <dbReference type="SAM" id="MobiDB-lite"/>
    </source>
</evidence>
<evidence type="ECO:0000269" key="6">
    <source>
    </source>
</evidence>
<evidence type="ECO:0000305" key="7"/>
<evidence type="ECO:0007744" key="8">
    <source>
    </source>
</evidence>
<name>PTN7_RAT</name>
<feature type="chain" id="PRO_0000094763" description="Tyrosine-protein phosphatase non-receptor type 7">
    <location>
        <begin position="1"/>
        <end position="359"/>
    </location>
</feature>
<feature type="domain" description="Tyrosine-protein phosphatase" evidence="3">
    <location>
        <begin position="97"/>
        <end position="349"/>
    </location>
</feature>
<feature type="region of interest" description="Disordered" evidence="5">
    <location>
        <begin position="1"/>
        <end position="34"/>
    </location>
</feature>
<feature type="region of interest" description="Interaction with MAP kinases" evidence="1">
    <location>
        <begin position="38"/>
        <end position="51"/>
    </location>
</feature>
<feature type="active site" description="Phosphocysteine intermediate" evidence="3 4">
    <location>
        <position position="290"/>
    </location>
</feature>
<feature type="binding site" evidence="1">
    <location>
        <position position="257"/>
    </location>
    <ligand>
        <name>substrate</name>
    </ligand>
</feature>
<feature type="binding site" evidence="1">
    <location>
        <begin position="290"/>
        <end position="296"/>
    </location>
    <ligand>
        <name>substrate</name>
    </ligand>
</feature>
<feature type="binding site" evidence="1">
    <location>
        <position position="334"/>
    </location>
    <ligand>
        <name>substrate</name>
    </ligand>
</feature>
<feature type="modified residue" description="Phosphoserine" evidence="2">
    <location>
        <position position="44"/>
    </location>
</feature>
<feature type="modified residue" description="Phosphothreonine" evidence="2">
    <location>
        <position position="66"/>
    </location>
</feature>
<feature type="modified residue" description="Phosphoserine" evidence="8">
    <location>
        <position position="93"/>
    </location>
</feature>
<feature type="modified residue" description="Phosphoserine" evidence="2">
    <location>
        <position position="143"/>
    </location>
</feature>
<feature type="modified residue" description="Cysteine sulfenic acid (-SOH)" evidence="6">
    <location>
        <position position="290"/>
    </location>
</feature>
<organism>
    <name type="scientific">Rattus norvegicus</name>
    <name type="common">Rat</name>
    <dbReference type="NCBI Taxonomy" id="10116"/>
    <lineage>
        <taxon>Eukaryota</taxon>
        <taxon>Metazoa</taxon>
        <taxon>Chordata</taxon>
        <taxon>Craniata</taxon>
        <taxon>Vertebrata</taxon>
        <taxon>Euteleostomi</taxon>
        <taxon>Mammalia</taxon>
        <taxon>Eutheria</taxon>
        <taxon>Euarchontoglires</taxon>
        <taxon>Glires</taxon>
        <taxon>Rodentia</taxon>
        <taxon>Myomorpha</taxon>
        <taxon>Muroidea</taxon>
        <taxon>Muridae</taxon>
        <taxon>Murinae</taxon>
        <taxon>Rattus</taxon>
    </lineage>
</organism>
<reference key="1">
    <citation type="journal article" date="1995" name="J. Biol. Chem.">
        <title>Aggregation of IgE receptors in rat basophilic leukemia 2H3 cells induces tyrosine phosphorylation of the cytosolic protein-tyrosine phosphatase HePTP.</title>
        <authorList>
            <person name="Swieter M."/>
            <person name="Berenstein E.H."/>
            <person name="Swaim W.D."/>
            <person name="Siraganian R.P."/>
        </authorList>
    </citation>
    <scope>NUCLEOTIDE SEQUENCE [MRNA]</scope>
</reference>
<reference key="2">
    <citation type="journal article" date="2010" name="J. Biol. Chem.">
        <title>Down-regulation of protein-tyrosine phosphatases activates an immune receptor in the absence of its translocation into lipid rafts.</title>
        <authorList>
            <person name="Heneberg P."/>
            <person name="Draberova L."/>
            <person name="Bambouskova M."/>
            <person name="Pompach P."/>
            <person name="Draber P."/>
        </authorList>
    </citation>
    <scope>SUBCELLULAR LOCATION</scope>
    <scope>OXIDATION AT CYS-290</scope>
    <scope>ACTIVITY REGULATION</scope>
</reference>
<reference key="3">
    <citation type="journal article" date="2012" name="Nat. Commun.">
        <title>Quantitative maps of protein phosphorylation sites across 14 different rat organs and tissues.</title>
        <authorList>
            <person name="Lundby A."/>
            <person name="Secher A."/>
            <person name="Lage K."/>
            <person name="Nordsborg N.B."/>
            <person name="Dmytriyev A."/>
            <person name="Lundby C."/>
            <person name="Olsen J.V."/>
        </authorList>
    </citation>
    <scope>PHOSPHORYLATION [LARGE SCALE ANALYSIS] AT SER-93</scope>
    <scope>IDENTIFICATION BY MASS SPECTROMETRY [LARGE SCALE ANALYSIS]</scope>
</reference>
<dbReference type="EC" id="3.1.3.48"/>
<dbReference type="EMBL" id="U28356">
    <property type="protein sequence ID" value="AAA84443.1"/>
    <property type="molecule type" value="mRNA"/>
</dbReference>
<dbReference type="RefSeq" id="NP_663716.1">
    <property type="nucleotide sequence ID" value="NM_145683.1"/>
</dbReference>
<dbReference type="RefSeq" id="XP_006249883.1">
    <property type="nucleotide sequence ID" value="XM_006249821.5"/>
</dbReference>
<dbReference type="SMR" id="P49445"/>
<dbReference type="FunCoup" id="P49445">
    <property type="interactions" value="405"/>
</dbReference>
<dbReference type="STRING" id="10116.ENSRNOP00000007833"/>
<dbReference type="iPTMnet" id="P49445"/>
<dbReference type="PhosphoSitePlus" id="P49445"/>
<dbReference type="PaxDb" id="10116-ENSRNOP00000007833"/>
<dbReference type="Ensembl" id="ENSRNOT00000007833.4">
    <property type="protein sequence ID" value="ENSRNOP00000007833.1"/>
    <property type="gene ID" value="ENSRNOG00000005807.4"/>
</dbReference>
<dbReference type="GeneID" id="246781"/>
<dbReference type="KEGG" id="rno:246781"/>
<dbReference type="UCSC" id="RGD:708516">
    <property type="organism name" value="rat"/>
</dbReference>
<dbReference type="AGR" id="RGD:708516"/>
<dbReference type="CTD" id="5778"/>
<dbReference type="RGD" id="708516">
    <property type="gene designation" value="Ptpn7"/>
</dbReference>
<dbReference type="eggNOG" id="KOG0789">
    <property type="taxonomic scope" value="Eukaryota"/>
</dbReference>
<dbReference type="GeneTree" id="ENSGT00940000160979"/>
<dbReference type="HOGENOM" id="CLU_001645_10_3_1"/>
<dbReference type="InParanoid" id="P49445"/>
<dbReference type="OMA" id="GYDGREK"/>
<dbReference type="OrthoDB" id="9993594at2759"/>
<dbReference type="PhylomeDB" id="P49445"/>
<dbReference type="TreeFam" id="TF331016"/>
<dbReference type="Reactome" id="R-RNO-5675221">
    <property type="pathway name" value="Negative regulation of MAPK pathway"/>
</dbReference>
<dbReference type="PRO" id="PR:P49445"/>
<dbReference type="Proteomes" id="UP000002494">
    <property type="component" value="Chromosome 13"/>
</dbReference>
<dbReference type="Bgee" id="ENSRNOG00000005807">
    <property type="expression patterns" value="Expressed in thymus and 19 other cell types or tissues"/>
</dbReference>
<dbReference type="GO" id="GO:0005737">
    <property type="term" value="C:cytoplasm"/>
    <property type="evidence" value="ECO:0000266"/>
    <property type="project" value="RGD"/>
</dbReference>
<dbReference type="GO" id="GO:0009898">
    <property type="term" value="C:cytoplasmic side of plasma membrane"/>
    <property type="evidence" value="ECO:0000266"/>
    <property type="project" value="RGD"/>
</dbReference>
<dbReference type="GO" id="GO:0005856">
    <property type="term" value="C:cytoskeleton"/>
    <property type="evidence" value="ECO:0007669"/>
    <property type="project" value="UniProtKB-SubCell"/>
</dbReference>
<dbReference type="GO" id="GO:0005829">
    <property type="term" value="C:cytosol"/>
    <property type="evidence" value="ECO:0000266"/>
    <property type="project" value="RGD"/>
</dbReference>
<dbReference type="GO" id="GO:0004725">
    <property type="term" value="F:protein tyrosine phosphatase activity"/>
    <property type="evidence" value="ECO:0000318"/>
    <property type="project" value="GO_Central"/>
</dbReference>
<dbReference type="GO" id="GO:0007165">
    <property type="term" value="P:signal transduction"/>
    <property type="evidence" value="ECO:0000318"/>
    <property type="project" value="GO_Central"/>
</dbReference>
<dbReference type="CDD" id="cd14612">
    <property type="entry name" value="PTPc-N7"/>
    <property type="match status" value="1"/>
</dbReference>
<dbReference type="FunFam" id="3.90.190.10:FF:000020">
    <property type="entry name" value="Tyrosine-protein phosphatase non-receptor type 5"/>
    <property type="match status" value="1"/>
</dbReference>
<dbReference type="Gene3D" id="3.90.190.10">
    <property type="entry name" value="Protein tyrosine phosphatase superfamily"/>
    <property type="match status" value="1"/>
</dbReference>
<dbReference type="InterPro" id="IPR029021">
    <property type="entry name" value="Prot-tyrosine_phosphatase-like"/>
</dbReference>
<dbReference type="InterPro" id="IPR000242">
    <property type="entry name" value="PTP_cat"/>
</dbReference>
<dbReference type="InterPro" id="IPR016130">
    <property type="entry name" value="Tyr_Pase_AS"/>
</dbReference>
<dbReference type="InterPro" id="IPR003595">
    <property type="entry name" value="Tyr_Pase_cat"/>
</dbReference>
<dbReference type="InterPro" id="IPR000387">
    <property type="entry name" value="Tyr_Pase_dom"/>
</dbReference>
<dbReference type="InterPro" id="IPR008356">
    <property type="entry name" value="Tyr_Pase_KIM-con"/>
</dbReference>
<dbReference type="PANTHER" id="PTHR46198">
    <property type="entry name" value="PROTEIN-TYROSINE-PHOSPHATASE"/>
    <property type="match status" value="1"/>
</dbReference>
<dbReference type="PANTHER" id="PTHR46198:SF3">
    <property type="entry name" value="PROTEIN-TYROSINE-PHOSPHATASE"/>
    <property type="match status" value="1"/>
</dbReference>
<dbReference type="Pfam" id="PF00102">
    <property type="entry name" value="Y_phosphatase"/>
    <property type="match status" value="1"/>
</dbReference>
<dbReference type="PRINTS" id="PR01778">
    <property type="entry name" value="KIMPTPASE"/>
</dbReference>
<dbReference type="PRINTS" id="PR00700">
    <property type="entry name" value="PRTYPHPHTASE"/>
</dbReference>
<dbReference type="SMART" id="SM00194">
    <property type="entry name" value="PTPc"/>
    <property type="match status" value="1"/>
</dbReference>
<dbReference type="SMART" id="SM00404">
    <property type="entry name" value="PTPc_motif"/>
    <property type="match status" value="1"/>
</dbReference>
<dbReference type="SUPFAM" id="SSF52799">
    <property type="entry name" value="(Phosphotyrosine protein) phosphatases II"/>
    <property type="match status" value="1"/>
</dbReference>
<dbReference type="PROSITE" id="PS00383">
    <property type="entry name" value="TYR_PHOSPHATASE_1"/>
    <property type="match status" value="1"/>
</dbReference>
<dbReference type="PROSITE" id="PS50056">
    <property type="entry name" value="TYR_PHOSPHATASE_2"/>
    <property type="match status" value="1"/>
</dbReference>
<dbReference type="PROSITE" id="PS50055">
    <property type="entry name" value="TYR_PHOSPHATASE_PTP"/>
    <property type="match status" value="1"/>
</dbReference>
<sequence>MVQACEGRSRAQLPTLSLGADMTQPPPAKAPAKKHVRLQERRGSSVALMLDVRSLGTVEPICSVNTPREVTLHFLRTAGHPLTRWTLQHQPPSPKQLEEEFLKIPSNFVNPEDLDIPGHASKDRYKTILPNPQSRVCLGRAHSQEDSDYINANYIRGYDGKEKVYIATQGPMPNTVADFWEMVWQEDVSLIVMLTQLREGKEKCVHYWPTEEEAYGPFQIRIQGMKEHPEYTVRHLTIQHQQECRSVKHILFSAWPDHQTPESAGPLLRLVAEVETPETAANSGPIVVHCSAGIGRTGCFIATRIGCQQLKARGEVDILGIVCQLRLDRGGMIQTAEQYQFLHHTLALYAAQLPPETDP</sequence>
<accession>P49445</accession>